<sequence length="319" mass="36007">MIDLSPLVRRLAGTPLAAWADSLPAELDERLTRSHGDLQRWKAALQALPALTAERIELNGRVSLSGTCHEETRAALRQALLGLSPWRKGPFELFGVLVDTEWRSDWKWQRVAPHLDLRGRRILDVGCGNGYYMWRMLGAGADCVIGIDPNWLFFCQFLALRHYLPELPAWHLPLALEDLPEKLEGFDTVFSMGVLYHRRSPIDHLLALKDCLRPGGELLLETLVVDGDVGTVLVPEDRYAQMRNVWFLPSVAALELWLRRAGFVEVRCVDVAVTSVEEQRATEWMTFQSLPDFLDPTDRGKTVEGLPAPTRAVLLARKP</sequence>
<reference key="1">
    <citation type="journal article" date="2009" name="J. Bacteriol.">
        <title>Genome sequence of Azotobacter vinelandii, an obligate aerobe specialized to support diverse anaerobic metabolic processes.</title>
        <authorList>
            <person name="Setubal J.C."/>
            <person name="Dos Santos P."/>
            <person name="Goldman B.S."/>
            <person name="Ertesvaag H."/>
            <person name="Espin G."/>
            <person name="Rubio L.M."/>
            <person name="Valla S."/>
            <person name="Almeida N.F."/>
            <person name="Balasubramanian D."/>
            <person name="Cromes L."/>
            <person name="Curatti L."/>
            <person name="Du Z."/>
            <person name="Godsy E."/>
            <person name="Goodner B."/>
            <person name="Hellner-Burris K."/>
            <person name="Hernandez J.A."/>
            <person name="Houmiel K."/>
            <person name="Imperial J."/>
            <person name="Kennedy C."/>
            <person name="Larson T.J."/>
            <person name="Latreille P."/>
            <person name="Ligon L.S."/>
            <person name="Lu J."/>
            <person name="Maerk M."/>
            <person name="Miller N.M."/>
            <person name="Norton S."/>
            <person name="O'Carroll I.P."/>
            <person name="Paulsen I."/>
            <person name="Raulfs E.C."/>
            <person name="Roemer R."/>
            <person name="Rosser J."/>
            <person name="Segura D."/>
            <person name="Slater S."/>
            <person name="Stricklin S.L."/>
            <person name="Studholme D.J."/>
            <person name="Sun J."/>
            <person name="Viana C.J."/>
            <person name="Wallin E."/>
            <person name="Wang B."/>
            <person name="Wheeler C."/>
            <person name="Zhu H."/>
            <person name="Dean D.R."/>
            <person name="Dixon R."/>
            <person name="Wood D."/>
        </authorList>
    </citation>
    <scope>NUCLEOTIDE SEQUENCE [LARGE SCALE GENOMIC DNA]</scope>
    <source>
        <strain>DJ / ATCC BAA-1303</strain>
    </source>
</reference>
<organism>
    <name type="scientific">Azotobacter vinelandii (strain DJ / ATCC BAA-1303)</name>
    <dbReference type="NCBI Taxonomy" id="322710"/>
    <lineage>
        <taxon>Bacteria</taxon>
        <taxon>Pseudomonadati</taxon>
        <taxon>Pseudomonadota</taxon>
        <taxon>Gammaproteobacteria</taxon>
        <taxon>Pseudomonadales</taxon>
        <taxon>Pseudomonadaceae</taxon>
        <taxon>Azotobacter</taxon>
    </lineage>
</organism>
<dbReference type="EC" id="2.5.1.-" evidence="1"/>
<dbReference type="EMBL" id="CP001157">
    <property type="protein sequence ID" value="ACO77602.1"/>
    <property type="molecule type" value="Genomic_DNA"/>
</dbReference>
<dbReference type="RefSeq" id="WP_012700021.1">
    <property type="nucleotide sequence ID" value="NC_012560.1"/>
</dbReference>
<dbReference type="SMR" id="C1DQS9"/>
<dbReference type="STRING" id="322710.Avin_13850"/>
<dbReference type="EnsemblBacteria" id="ACO77602">
    <property type="protein sequence ID" value="ACO77602"/>
    <property type="gene ID" value="Avin_13850"/>
</dbReference>
<dbReference type="GeneID" id="88184686"/>
<dbReference type="KEGG" id="avn:Avin_13850"/>
<dbReference type="eggNOG" id="COG0500">
    <property type="taxonomic scope" value="Bacteria"/>
</dbReference>
<dbReference type="HOGENOM" id="CLU_052665_0_0_6"/>
<dbReference type="OrthoDB" id="9773188at2"/>
<dbReference type="Proteomes" id="UP000002424">
    <property type="component" value="Chromosome"/>
</dbReference>
<dbReference type="GO" id="GO:0008168">
    <property type="term" value="F:methyltransferase activity"/>
    <property type="evidence" value="ECO:0007669"/>
    <property type="project" value="TreeGrafter"/>
</dbReference>
<dbReference type="GO" id="GO:0016765">
    <property type="term" value="F:transferase activity, transferring alkyl or aryl (other than methyl) groups"/>
    <property type="evidence" value="ECO:0007669"/>
    <property type="project" value="UniProtKB-UniRule"/>
</dbReference>
<dbReference type="GO" id="GO:0002098">
    <property type="term" value="P:tRNA wobble uridine modification"/>
    <property type="evidence" value="ECO:0007669"/>
    <property type="project" value="InterPro"/>
</dbReference>
<dbReference type="CDD" id="cd02440">
    <property type="entry name" value="AdoMet_MTases"/>
    <property type="match status" value="1"/>
</dbReference>
<dbReference type="Gene3D" id="3.40.50.150">
    <property type="entry name" value="Vaccinia Virus protein VP39"/>
    <property type="match status" value="1"/>
</dbReference>
<dbReference type="HAMAP" id="MF_01590">
    <property type="entry name" value="tRNA_carboxymethyltr_CmoB"/>
    <property type="match status" value="1"/>
</dbReference>
<dbReference type="InterPro" id="IPR010017">
    <property type="entry name" value="CmoB"/>
</dbReference>
<dbReference type="InterPro" id="IPR027555">
    <property type="entry name" value="Mo5U34_MeTrfas-like"/>
</dbReference>
<dbReference type="InterPro" id="IPR029063">
    <property type="entry name" value="SAM-dependent_MTases_sf"/>
</dbReference>
<dbReference type="NCBIfam" id="NF011650">
    <property type="entry name" value="PRK15068.1"/>
    <property type="match status" value="1"/>
</dbReference>
<dbReference type="NCBIfam" id="TIGR00452">
    <property type="entry name" value="tRNA 5-methoxyuridine(34)/uridine 5-oxyacetic acid(34) synthase CmoB"/>
    <property type="match status" value="1"/>
</dbReference>
<dbReference type="PANTHER" id="PTHR43464">
    <property type="entry name" value="METHYLTRANSFERASE"/>
    <property type="match status" value="1"/>
</dbReference>
<dbReference type="PANTHER" id="PTHR43464:SF95">
    <property type="entry name" value="TRNA U34 CARBOXYMETHYLTRANSFERASE"/>
    <property type="match status" value="1"/>
</dbReference>
<dbReference type="Pfam" id="PF08003">
    <property type="entry name" value="Methyltransf_9"/>
    <property type="match status" value="1"/>
</dbReference>
<dbReference type="SUPFAM" id="SSF53335">
    <property type="entry name" value="S-adenosyl-L-methionine-dependent methyltransferases"/>
    <property type="match status" value="1"/>
</dbReference>
<feature type="chain" id="PRO_1000215640" description="tRNA U34 carboxymethyltransferase">
    <location>
        <begin position="1"/>
        <end position="319"/>
    </location>
</feature>
<feature type="binding site" evidence="1">
    <location>
        <position position="88"/>
    </location>
    <ligand>
        <name>carboxy-S-adenosyl-L-methionine</name>
        <dbReference type="ChEBI" id="CHEBI:134278"/>
    </ligand>
</feature>
<feature type="binding site" evidence="1">
    <location>
        <position position="102"/>
    </location>
    <ligand>
        <name>carboxy-S-adenosyl-L-methionine</name>
        <dbReference type="ChEBI" id="CHEBI:134278"/>
    </ligand>
</feature>
<feature type="binding site" evidence="1">
    <location>
        <position position="107"/>
    </location>
    <ligand>
        <name>carboxy-S-adenosyl-L-methionine</name>
        <dbReference type="ChEBI" id="CHEBI:134278"/>
    </ligand>
</feature>
<feature type="binding site" evidence="1">
    <location>
        <position position="126"/>
    </location>
    <ligand>
        <name>carboxy-S-adenosyl-L-methionine</name>
        <dbReference type="ChEBI" id="CHEBI:134278"/>
    </ligand>
</feature>
<feature type="binding site" evidence="1">
    <location>
        <begin position="176"/>
        <end position="177"/>
    </location>
    <ligand>
        <name>carboxy-S-adenosyl-L-methionine</name>
        <dbReference type="ChEBI" id="CHEBI:134278"/>
    </ligand>
</feature>
<feature type="binding site" evidence="1">
    <location>
        <position position="192"/>
    </location>
    <ligand>
        <name>carboxy-S-adenosyl-L-methionine</name>
        <dbReference type="ChEBI" id="CHEBI:134278"/>
    </ligand>
</feature>
<feature type="binding site" evidence="1">
    <location>
        <position position="196"/>
    </location>
    <ligand>
        <name>carboxy-S-adenosyl-L-methionine</name>
        <dbReference type="ChEBI" id="CHEBI:134278"/>
    </ligand>
</feature>
<feature type="binding site" evidence="1">
    <location>
        <position position="311"/>
    </location>
    <ligand>
        <name>carboxy-S-adenosyl-L-methionine</name>
        <dbReference type="ChEBI" id="CHEBI:134278"/>
    </ligand>
</feature>
<comment type="function">
    <text evidence="1">Catalyzes carboxymethyl transfer from carboxy-S-adenosyl-L-methionine (Cx-SAM) to 5-hydroxyuridine (ho5U) to form 5-carboxymethoxyuridine (cmo5U) at position 34 in tRNAs.</text>
</comment>
<comment type="catalytic activity">
    <reaction evidence="1">
        <text>carboxy-S-adenosyl-L-methionine + 5-hydroxyuridine(34) in tRNA = 5-carboxymethoxyuridine(34) in tRNA + S-adenosyl-L-homocysteine + H(+)</text>
        <dbReference type="Rhea" id="RHEA:52848"/>
        <dbReference type="Rhea" id="RHEA-COMP:13381"/>
        <dbReference type="Rhea" id="RHEA-COMP:13383"/>
        <dbReference type="ChEBI" id="CHEBI:15378"/>
        <dbReference type="ChEBI" id="CHEBI:57856"/>
        <dbReference type="ChEBI" id="CHEBI:134278"/>
        <dbReference type="ChEBI" id="CHEBI:136877"/>
        <dbReference type="ChEBI" id="CHEBI:136879"/>
    </reaction>
</comment>
<comment type="subunit">
    <text evidence="1">Homotetramer.</text>
</comment>
<comment type="similarity">
    <text evidence="1">Belongs to the class I-like SAM-binding methyltransferase superfamily. CmoB family.</text>
</comment>
<proteinExistence type="inferred from homology"/>
<name>CMOB_AZOVD</name>
<keyword id="KW-0808">Transferase</keyword>
<keyword id="KW-0819">tRNA processing</keyword>
<gene>
    <name evidence="1" type="primary">cmoB</name>
    <name type="ordered locus">Avin_13850</name>
</gene>
<accession>C1DQS9</accession>
<protein>
    <recommendedName>
        <fullName evidence="1">tRNA U34 carboxymethyltransferase</fullName>
        <ecNumber evidence="1">2.5.1.-</ecNumber>
    </recommendedName>
</protein>
<evidence type="ECO:0000255" key="1">
    <source>
        <dbReference type="HAMAP-Rule" id="MF_01590"/>
    </source>
</evidence>